<feature type="chain" id="PRO_0000125624" description="Large ribosomal subunit protein uL1">
    <location>
        <begin position="1"/>
        <end position="226"/>
    </location>
</feature>
<reference key="1">
    <citation type="journal article" date="2004" name="Nucleic Acids Res.">
        <title>Comparative analysis of the Borrelia garinii genome.</title>
        <authorList>
            <person name="Gloeckner G."/>
            <person name="Lehmann R."/>
            <person name="Romualdi A."/>
            <person name="Pradella S."/>
            <person name="Schulte-Spechtel U."/>
            <person name="Schilhabel M."/>
            <person name="Wilske B."/>
            <person name="Suehnel J."/>
            <person name="Platzer M."/>
        </authorList>
    </citation>
    <scope>NUCLEOTIDE SEQUENCE [LARGE SCALE GENOMIC DNA]</scope>
    <source>
        <strain>ATCC BAA-2496 / DSM 23469 / PBi</strain>
    </source>
</reference>
<protein>
    <recommendedName>
        <fullName evidence="1">Large ribosomal subunit protein uL1</fullName>
    </recommendedName>
    <alternativeName>
        <fullName evidence="2">50S ribosomal protein L1</fullName>
    </alternativeName>
</protein>
<organism>
    <name type="scientific">Borrelia garinii subsp. bavariensis (strain ATCC BAA-2496 / DSM 23469 / PBi)</name>
    <name type="common">Borreliella bavariensis</name>
    <dbReference type="NCBI Taxonomy" id="290434"/>
    <lineage>
        <taxon>Bacteria</taxon>
        <taxon>Pseudomonadati</taxon>
        <taxon>Spirochaetota</taxon>
        <taxon>Spirochaetia</taxon>
        <taxon>Spirochaetales</taxon>
        <taxon>Borreliaceae</taxon>
        <taxon>Borreliella</taxon>
    </lineage>
</organism>
<proteinExistence type="inferred from homology"/>
<sequence>MSKKGKKYIAAFSKVDKSKFYSIEDAISLLKEIKFVKFDETIDISINLNLKKNHTVRDTIVLPNQFMKPKRILVFAKGDRADEARAFGATYIGDDDLINKIKSGWDEFDIVVATPDMMKDVGRLGPILGKRGLMPNPKTQTVTNNLKDAINSLKKGRTEFRANKNGVISFSFGKSSMDNAKIKENYDEFIKEVVKKRPSDLKGAFIDSIYISSTMGPSIKIDFVWR</sequence>
<accession>Q661M6</accession>
<evidence type="ECO:0000255" key="1">
    <source>
        <dbReference type="HAMAP-Rule" id="MF_01318"/>
    </source>
</evidence>
<evidence type="ECO:0000305" key="2"/>
<gene>
    <name evidence="1" type="primary">rplA</name>
    <name type="ordered locus">BG0393</name>
</gene>
<name>RL1_BORGP</name>
<dbReference type="EMBL" id="CP000013">
    <property type="protein sequence ID" value="AAU07245.1"/>
    <property type="molecule type" value="Genomic_DNA"/>
</dbReference>
<dbReference type="RefSeq" id="WP_011193718.1">
    <property type="nucleotide sequence ID" value="NZ_CP028872.1"/>
</dbReference>
<dbReference type="SMR" id="Q661M6"/>
<dbReference type="GeneID" id="45161180"/>
<dbReference type="KEGG" id="bga:BG0393"/>
<dbReference type="eggNOG" id="COG0081">
    <property type="taxonomic scope" value="Bacteria"/>
</dbReference>
<dbReference type="HOGENOM" id="CLU_062853_0_0_12"/>
<dbReference type="OrthoDB" id="9803740at2"/>
<dbReference type="Proteomes" id="UP000002276">
    <property type="component" value="Chromosome"/>
</dbReference>
<dbReference type="GO" id="GO:0015934">
    <property type="term" value="C:large ribosomal subunit"/>
    <property type="evidence" value="ECO:0007669"/>
    <property type="project" value="InterPro"/>
</dbReference>
<dbReference type="GO" id="GO:0019843">
    <property type="term" value="F:rRNA binding"/>
    <property type="evidence" value="ECO:0007669"/>
    <property type="project" value="UniProtKB-UniRule"/>
</dbReference>
<dbReference type="GO" id="GO:0003735">
    <property type="term" value="F:structural constituent of ribosome"/>
    <property type="evidence" value="ECO:0007669"/>
    <property type="project" value="InterPro"/>
</dbReference>
<dbReference type="GO" id="GO:0000049">
    <property type="term" value="F:tRNA binding"/>
    <property type="evidence" value="ECO:0007669"/>
    <property type="project" value="UniProtKB-KW"/>
</dbReference>
<dbReference type="GO" id="GO:0006417">
    <property type="term" value="P:regulation of translation"/>
    <property type="evidence" value="ECO:0007669"/>
    <property type="project" value="UniProtKB-KW"/>
</dbReference>
<dbReference type="GO" id="GO:0006412">
    <property type="term" value="P:translation"/>
    <property type="evidence" value="ECO:0007669"/>
    <property type="project" value="UniProtKB-UniRule"/>
</dbReference>
<dbReference type="CDD" id="cd00403">
    <property type="entry name" value="Ribosomal_L1"/>
    <property type="match status" value="1"/>
</dbReference>
<dbReference type="FunFam" id="3.40.50.790:FF:000001">
    <property type="entry name" value="50S ribosomal protein L1"/>
    <property type="match status" value="1"/>
</dbReference>
<dbReference type="Gene3D" id="3.30.190.20">
    <property type="match status" value="1"/>
</dbReference>
<dbReference type="Gene3D" id="3.40.50.790">
    <property type="match status" value="1"/>
</dbReference>
<dbReference type="HAMAP" id="MF_01318_B">
    <property type="entry name" value="Ribosomal_uL1_B"/>
    <property type="match status" value="1"/>
</dbReference>
<dbReference type="InterPro" id="IPR005878">
    <property type="entry name" value="Ribosom_uL1_bac-type"/>
</dbReference>
<dbReference type="InterPro" id="IPR002143">
    <property type="entry name" value="Ribosomal_uL1"/>
</dbReference>
<dbReference type="InterPro" id="IPR023674">
    <property type="entry name" value="Ribosomal_uL1-like"/>
</dbReference>
<dbReference type="InterPro" id="IPR028364">
    <property type="entry name" value="Ribosomal_uL1/biogenesis"/>
</dbReference>
<dbReference type="InterPro" id="IPR016095">
    <property type="entry name" value="Ribosomal_uL1_3-a/b-sand"/>
</dbReference>
<dbReference type="InterPro" id="IPR023673">
    <property type="entry name" value="Ribosomal_uL1_CS"/>
</dbReference>
<dbReference type="NCBIfam" id="TIGR01169">
    <property type="entry name" value="rplA_bact"/>
    <property type="match status" value="1"/>
</dbReference>
<dbReference type="PANTHER" id="PTHR36427">
    <property type="entry name" value="54S RIBOSOMAL PROTEIN L1, MITOCHONDRIAL"/>
    <property type="match status" value="1"/>
</dbReference>
<dbReference type="PANTHER" id="PTHR36427:SF3">
    <property type="entry name" value="LARGE RIBOSOMAL SUBUNIT PROTEIN UL1M"/>
    <property type="match status" value="1"/>
</dbReference>
<dbReference type="Pfam" id="PF00687">
    <property type="entry name" value="Ribosomal_L1"/>
    <property type="match status" value="1"/>
</dbReference>
<dbReference type="PIRSF" id="PIRSF002155">
    <property type="entry name" value="Ribosomal_L1"/>
    <property type="match status" value="1"/>
</dbReference>
<dbReference type="SUPFAM" id="SSF56808">
    <property type="entry name" value="Ribosomal protein L1"/>
    <property type="match status" value="1"/>
</dbReference>
<dbReference type="PROSITE" id="PS01199">
    <property type="entry name" value="RIBOSOMAL_L1"/>
    <property type="match status" value="1"/>
</dbReference>
<comment type="function">
    <text evidence="1">Binds directly to 23S rRNA. The L1 stalk is quite mobile in the ribosome, and is involved in E site tRNA release.</text>
</comment>
<comment type="function">
    <text evidence="1">Protein L1 is also a translational repressor protein, it controls the translation of the L11 operon by binding to its mRNA.</text>
</comment>
<comment type="subunit">
    <text evidence="1">Part of the 50S ribosomal subunit.</text>
</comment>
<comment type="similarity">
    <text evidence="1">Belongs to the universal ribosomal protein uL1 family.</text>
</comment>
<keyword id="KW-0678">Repressor</keyword>
<keyword id="KW-0687">Ribonucleoprotein</keyword>
<keyword id="KW-0689">Ribosomal protein</keyword>
<keyword id="KW-0694">RNA-binding</keyword>
<keyword id="KW-0699">rRNA-binding</keyword>
<keyword id="KW-0810">Translation regulation</keyword>
<keyword id="KW-0820">tRNA-binding</keyword>